<gene>
    <name evidence="1" type="primary">rpsH</name>
    <name type="ordered locus">Franean1_6035</name>
</gene>
<feature type="chain" id="PRO_1000140559" description="Small ribosomal subunit protein uS8">
    <location>
        <begin position="1"/>
        <end position="135"/>
    </location>
</feature>
<proteinExistence type="inferred from homology"/>
<accession>A8LC42</accession>
<keyword id="KW-0687">Ribonucleoprotein</keyword>
<keyword id="KW-0689">Ribosomal protein</keyword>
<keyword id="KW-0694">RNA-binding</keyword>
<keyword id="KW-0699">rRNA-binding</keyword>
<reference key="1">
    <citation type="journal article" date="2007" name="Genome Res.">
        <title>Genome characteristics of facultatively symbiotic Frankia sp. strains reflect host range and host plant biogeography.</title>
        <authorList>
            <person name="Normand P."/>
            <person name="Lapierre P."/>
            <person name="Tisa L.S."/>
            <person name="Gogarten J.P."/>
            <person name="Alloisio N."/>
            <person name="Bagnarol E."/>
            <person name="Bassi C.A."/>
            <person name="Berry A.M."/>
            <person name="Bickhart D.M."/>
            <person name="Choisne N."/>
            <person name="Couloux A."/>
            <person name="Cournoyer B."/>
            <person name="Cruveiller S."/>
            <person name="Daubin V."/>
            <person name="Demange N."/>
            <person name="Francino M.P."/>
            <person name="Goltsman E."/>
            <person name="Huang Y."/>
            <person name="Kopp O.R."/>
            <person name="Labarre L."/>
            <person name="Lapidus A."/>
            <person name="Lavire C."/>
            <person name="Marechal J."/>
            <person name="Martinez M."/>
            <person name="Mastronunzio J.E."/>
            <person name="Mullin B.C."/>
            <person name="Niemann J."/>
            <person name="Pujic P."/>
            <person name="Rawnsley T."/>
            <person name="Rouy Z."/>
            <person name="Schenowitz C."/>
            <person name="Sellstedt A."/>
            <person name="Tavares F."/>
            <person name="Tomkins J.P."/>
            <person name="Vallenet D."/>
            <person name="Valverde C."/>
            <person name="Wall L.G."/>
            <person name="Wang Y."/>
            <person name="Medigue C."/>
            <person name="Benson D.R."/>
        </authorList>
    </citation>
    <scope>NUCLEOTIDE SEQUENCE [LARGE SCALE GENOMIC DNA]</scope>
    <source>
        <strain>EAN1pec</strain>
    </source>
</reference>
<evidence type="ECO:0000255" key="1">
    <source>
        <dbReference type="HAMAP-Rule" id="MF_01302"/>
    </source>
</evidence>
<evidence type="ECO:0000305" key="2"/>
<organism>
    <name type="scientific">Parafrankia sp. (strain EAN1pec)</name>
    <dbReference type="NCBI Taxonomy" id="298653"/>
    <lineage>
        <taxon>Bacteria</taxon>
        <taxon>Bacillati</taxon>
        <taxon>Actinomycetota</taxon>
        <taxon>Actinomycetes</taxon>
        <taxon>Frankiales</taxon>
        <taxon>Frankiaceae</taxon>
        <taxon>Parafrankia</taxon>
    </lineage>
</organism>
<protein>
    <recommendedName>
        <fullName evidence="1">Small ribosomal subunit protein uS8</fullName>
    </recommendedName>
    <alternativeName>
        <fullName evidence="2">30S ribosomal protein S8</fullName>
    </alternativeName>
</protein>
<name>RS8_PARS2</name>
<sequence length="135" mass="14845">MTMTDPIADMLTRVRNANRAYHDRVVMPHSKIKTHIAEILQQEGYILGWHVEDPAEGAVGRTLIVDLKYGPNRERSIAGVKRISKPGLRVYAKSTNLPKVLGGLGVAIISTSSGLLTDRQAGKRRVGGEVLAYVW</sequence>
<comment type="function">
    <text evidence="1">One of the primary rRNA binding proteins, it binds directly to 16S rRNA central domain where it helps coordinate assembly of the platform of the 30S subunit.</text>
</comment>
<comment type="subunit">
    <text evidence="1">Part of the 30S ribosomal subunit. Contacts proteins S5 and S12.</text>
</comment>
<comment type="similarity">
    <text evidence="1">Belongs to the universal ribosomal protein uS8 family.</text>
</comment>
<dbReference type="EMBL" id="CP000820">
    <property type="protein sequence ID" value="ABW15379.1"/>
    <property type="molecule type" value="Genomic_DNA"/>
</dbReference>
<dbReference type="RefSeq" id="WP_018505119.1">
    <property type="nucleotide sequence ID" value="NC_009921.1"/>
</dbReference>
<dbReference type="SMR" id="A8LC42"/>
<dbReference type="STRING" id="298653.Franean1_6035"/>
<dbReference type="KEGG" id="fre:Franean1_6035"/>
<dbReference type="eggNOG" id="COG0096">
    <property type="taxonomic scope" value="Bacteria"/>
</dbReference>
<dbReference type="HOGENOM" id="CLU_098428_0_1_11"/>
<dbReference type="GO" id="GO:1990904">
    <property type="term" value="C:ribonucleoprotein complex"/>
    <property type="evidence" value="ECO:0007669"/>
    <property type="project" value="UniProtKB-KW"/>
</dbReference>
<dbReference type="GO" id="GO:0005840">
    <property type="term" value="C:ribosome"/>
    <property type="evidence" value="ECO:0007669"/>
    <property type="project" value="UniProtKB-KW"/>
</dbReference>
<dbReference type="GO" id="GO:0019843">
    <property type="term" value="F:rRNA binding"/>
    <property type="evidence" value="ECO:0007669"/>
    <property type="project" value="UniProtKB-UniRule"/>
</dbReference>
<dbReference type="GO" id="GO:0003735">
    <property type="term" value="F:structural constituent of ribosome"/>
    <property type="evidence" value="ECO:0007669"/>
    <property type="project" value="InterPro"/>
</dbReference>
<dbReference type="GO" id="GO:0006412">
    <property type="term" value="P:translation"/>
    <property type="evidence" value="ECO:0007669"/>
    <property type="project" value="UniProtKB-UniRule"/>
</dbReference>
<dbReference type="FunFam" id="3.30.1370.30:FF:000002">
    <property type="entry name" value="30S ribosomal protein S8"/>
    <property type="match status" value="1"/>
</dbReference>
<dbReference type="FunFam" id="3.30.1490.10:FF:000001">
    <property type="entry name" value="30S ribosomal protein S8"/>
    <property type="match status" value="1"/>
</dbReference>
<dbReference type="Gene3D" id="3.30.1370.30">
    <property type="match status" value="1"/>
</dbReference>
<dbReference type="Gene3D" id="3.30.1490.10">
    <property type="match status" value="1"/>
</dbReference>
<dbReference type="HAMAP" id="MF_01302_B">
    <property type="entry name" value="Ribosomal_uS8_B"/>
    <property type="match status" value="1"/>
</dbReference>
<dbReference type="InterPro" id="IPR000630">
    <property type="entry name" value="Ribosomal_uS8"/>
</dbReference>
<dbReference type="InterPro" id="IPR035987">
    <property type="entry name" value="Ribosomal_uS8_sf"/>
</dbReference>
<dbReference type="NCBIfam" id="NF001109">
    <property type="entry name" value="PRK00136.1"/>
    <property type="match status" value="1"/>
</dbReference>
<dbReference type="PANTHER" id="PTHR11758">
    <property type="entry name" value="40S RIBOSOMAL PROTEIN S15A"/>
    <property type="match status" value="1"/>
</dbReference>
<dbReference type="Pfam" id="PF00410">
    <property type="entry name" value="Ribosomal_S8"/>
    <property type="match status" value="1"/>
</dbReference>
<dbReference type="SUPFAM" id="SSF56047">
    <property type="entry name" value="Ribosomal protein S8"/>
    <property type="match status" value="1"/>
</dbReference>